<comment type="function">
    <text evidence="4 5">Has holdase chaperone activity that may fold catalase to a functional structure (PubMed:25700484). Not required for the peroxisome import of catalases (PubMed:25700484). Required for the activity of catalases and acts mainly at the post-transcriptional level (PubMed:24285797).</text>
</comment>
<comment type="subunit">
    <text evidence="5">Interacts with the catalases CAT1, CAT2 and CAT3. This interaction is not induced by alkaline stress or H(2)O(2) and NaCl treatments.</text>
</comment>
<comment type="subcellular location">
    <subcellularLocation>
        <location evidence="4 5">Cytoplasm</location>
    </subcellularLocation>
    <subcellularLocation>
        <location evidence="4">Nucleus</location>
    </subcellularLocation>
</comment>
<comment type="tissue specificity">
    <text evidence="5">Expressed in roots, stems, leaves, flowers and siliques.</text>
</comment>
<comment type="induction">
    <text evidence="5">Up-regulated upon H(2)O(2) or salt treatments.</text>
</comment>
<comment type="domain">
    <text evidence="5">The RING-type zinc finger domain (1-158) is involved in the increase of catalase activity and zinc ion binding is required for this increase.</text>
</comment>
<comment type="domain">
    <text evidence="5">The interaction with CAT2 is through the C-terminal TPR-containing domain (159-405).</text>
</comment>
<comment type="disruption phenotype">
    <text evidence="4 5">Hyponastic leaves and reduced growth (PubMed:24285797). Severely reduced catalase activities (PubMed:24285797). Hypersensitivity to multiple abiotic stresses (PubMed:25700484).</text>
</comment>
<organism>
    <name type="scientific">Arabidopsis thaliana</name>
    <name type="common">Mouse-ear cress</name>
    <dbReference type="NCBI Taxonomy" id="3702"/>
    <lineage>
        <taxon>Eukaryota</taxon>
        <taxon>Viridiplantae</taxon>
        <taxon>Streptophyta</taxon>
        <taxon>Embryophyta</taxon>
        <taxon>Tracheophyta</taxon>
        <taxon>Spermatophyta</taxon>
        <taxon>Magnoliopsida</taxon>
        <taxon>eudicotyledons</taxon>
        <taxon>Gunneridae</taxon>
        <taxon>Pentapetalae</taxon>
        <taxon>rosids</taxon>
        <taxon>malvids</taxon>
        <taxon>Brassicales</taxon>
        <taxon>Brassicaceae</taxon>
        <taxon>Camelineae</taxon>
        <taxon>Arabidopsis</taxon>
    </lineage>
</organism>
<accession>Q9M2V1</accession>
<accession>B9DI00</accession>
<gene>
    <name evidence="6" type="primary">NCA1</name>
    <name evidence="7" type="ordered locus">At3g54360</name>
    <name evidence="8" type="ORF">T12E18.50</name>
</gene>
<sequence>MTTTSVCPFSKAARPDDGSTRKQGEITASGCPFSKAARPDDASARKQGETTASGCPFSKSARPDENGSKGCPEQEGNLNKDSTDSATVPAKCPFGYDSQTFKLGPFSCMLCQALLYESSRCVPCTHVFCKVCLTRFKDCPLCGADIESIEVDENLQKMVDQFIEGHARIKRSVVNGTEKEEVENDNKKVIYADVSMERGSFLVQQAMRAFSAQNYESAKSRLAMCTEDIRDQLGREGNTPELCSQLGAVLGMLGDCSRAMGDSSSAVKHFEESVEFLMKLPLNDLEITHTLSVSLNKIGDLKYYDEDLQAARSYYDRALNVRRDAMKHHPNAPSQILDVAVSLAKVADIDRTLQNEVAATDGFKEGMRLLESLKLDSEDSALEQRRLSVLEFLKKQVETDAETAL</sequence>
<feature type="chain" id="PRO_0000440614" description="Protein NCA1">
    <location>
        <begin position="1"/>
        <end position="405"/>
    </location>
</feature>
<feature type="repeat" description="TPR 1" evidence="1">
    <location>
        <begin position="247"/>
        <end position="280"/>
    </location>
</feature>
<feature type="repeat" description="TPR 2" evidence="1">
    <location>
        <begin position="292"/>
        <end position="325"/>
    </location>
</feature>
<feature type="zinc finger region" description="RING-type" evidence="2">
    <location>
        <begin position="108"/>
        <end position="142"/>
    </location>
</feature>
<feature type="region of interest" description="Disordered" evidence="3">
    <location>
        <begin position="1"/>
        <end position="85"/>
    </location>
</feature>
<feature type="compositionally biased region" description="Basic and acidic residues" evidence="3">
    <location>
        <begin position="13"/>
        <end position="24"/>
    </location>
</feature>
<feature type="compositionally biased region" description="Basic and acidic residues" evidence="3">
    <location>
        <begin position="37"/>
        <end position="48"/>
    </location>
</feature>
<feature type="compositionally biased region" description="Polar residues" evidence="3">
    <location>
        <begin position="76"/>
        <end position="85"/>
    </location>
</feature>
<feature type="mutagenesis site" description="No effect on the interaction with CAT2, but no increase of catalase activity." evidence="5">
    <original>C</original>
    <variation>S</variation>
    <location>
        <position position="111"/>
    </location>
</feature>
<feature type="mutagenesis site" description="No effect on the interaction with CAT2, but no increase of catalase activity." evidence="5">
    <original>H</original>
    <variation>Y</variation>
    <location>
        <position position="126"/>
    </location>
</feature>
<feature type="mutagenesis site" description="No effect on the interaction with CAT2, but no increase of catalase activity." evidence="5">
    <original>C</original>
    <variation>A</variation>
    <location>
        <position position="129"/>
    </location>
</feature>
<reference key="1">
    <citation type="journal article" date="2000" name="Nature">
        <title>Sequence and analysis of chromosome 3 of the plant Arabidopsis thaliana.</title>
        <authorList>
            <person name="Salanoubat M."/>
            <person name="Lemcke K."/>
            <person name="Rieger M."/>
            <person name="Ansorge W."/>
            <person name="Unseld M."/>
            <person name="Fartmann B."/>
            <person name="Valle G."/>
            <person name="Bloecker H."/>
            <person name="Perez-Alonso M."/>
            <person name="Obermaier B."/>
            <person name="Delseny M."/>
            <person name="Boutry M."/>
            <person name="Grivell L.A."/>
            <person name="Mache R."/>
            <person name="Puigdomenech P."/>
            <person name="De Simone V."/>
            <person name="Choisne N."/>
            <person name="Artiguenave F."/>
            <person name="Robert C."/>
            <person name="Brottier P."/>
            <person name="Wincker P."/>
            <person name="Cattolico L."/>
            <person name="Weissenbach J."/>
            <person name="Saurin W."/>
            <person name="Quetier F."/>
            <person name="Schaefer M."/>
            <person name="Mueller-Auer S."/>
            <person name="Gabel C."/>
            <person name="Fuchs M."/>
            <person name="Benes V."/>
            <person name="Wurmbach E."/>
            <person name="Drzonek H."/>
            <person name="Erfle H."/>
            <person name="Jordan N."/>
            <person name="Bangert S."/>
            <person name="Wiedelmann R."/>
            <person name="Kranz H."/>
            <person name="Voss H."/>
            <person name="Holland R."/>
            <person name="Brandt P."/>
            <person name="Nyakatura G."/>
            <person name="Vezzi A."/>
            <person name="D'Angelo M."/>
            <person name="Pallavicini A."/>
            <person name="Toppo S."/>
            <person name="Simionati B."/>
            <person name="Conrad A."/>
            <person name="Hornischer K."/>
            <person name="Kauer G."/>
            <person name="Loehnert T.-H."/>
            <person name="Nordsiek G."/>
            <person name="Reichelt J."/>
            <person name="Scharfe M."/>
            <person name="Schoen O."/>
            <person name="Bargues M."/>
            <person name="Terol J."/>
            <person name="Climent J."/>
            <person name="Navarro P."/>
            <person name="Collado C."/>
            <person name="Perez-Perez A."/>
            <person name="Ottenwaelder B."/>
            <person name="Duchemin D."/>
            <person name="Cooke R."/>
            <person name="Laudie M."/>
            <person name="Berger-Llauro C."/>
            <person name="Purnelle B."/>
            <person name="Masuy D."/>
            <person name="de Haan M."/>
            <person name="Maarse A.C."/>
            <person name="Alcaraz J.-P."/>
            <person name="Cottet A."/>
            <person name="Casacuberta E."/>
            <person name="Monfort A."/>
            <person name="Argiriou A."/>
            <person name="Flores M."/>
            <person name="Liguori R."/>
            <person name="Vitale D."/>
            <person name="Mannhaupt G."/>
            <person name="Haase D."/>
            <person name="Schoof H."/>
            <person name="Rudd S."/>
            <person name="Zaccaria P."/>
            <person name="Mewes H.-W."/>
            <person name="Mayer K.F.X."/>
            <person name="Kaul S."/>
            <person name="Town C.D."/>
            <person name="Koo H.L."/>
            <person name="Tallon L.J."/>
            <person name="Jenkins J."/>
            <person name="Rooney T."/>
            <person name="Rizzo M."/>
            <person name="Walts A."/>
            <person name="Utterback T."/>
            <person name="Fujii C.Y."/>
            <person name="Shea T.P."/>
            <person name="Creasy T.H."/>
            <person name="Haas B."/>
            <person name="Maiti R."/>
            <person name="Wu D."/>
            <person name="Peterson J."/>
            <person name="Van Aken S."/>
            <person name="Pai G."/>
            <person name="Militscher J."/>
            <person name="Sellers P."/>
            <person name="Gill J.E."/>
            <person name="Feldblyum T.V."/>
            <person name="Preuss D."/>
            <person name="Lin X."/>
            <person name="Nierman W.C."/>
            <person name="Salzberg S.L."/>
            <person name="White O."/>
            <person name="Venter J.C."/>
            <person name="Fraser C.M."/>
            <person name="Kaneko T."/>
            <person name="Nakamura Y."/>
            <person name="Sato S."/>
            <person name="Kato T."/>
            <person name="Asamizu E."/>
            <person name="Sasamoto S."/>
            <person name="Kimura T."/>
            <person name="Idesawa K."/>
            <person name="Kawashima K."/>
            <person name="Kishida Y."/>
            <person name="Kiyokawa C."/>
            <person name="Kohara M."/>
            <person name="Matsumoto M."/>
            <person name="Matsuno A."/>
            <person name="Muraki A."/>
            <person name="Nakayama S."/>
            <person name="Nakazaki N."/>
            <person name="Shinpo S."/>
            <person name="Takeuchi C."/>
            <person name="Wada T."/>
            <person name="Watanabe A."/>
            <person name="Yamada M."/>
            <person name="Yasuda M."/>
            <person name="Tabata S."/>
        </authorList>
    </citation>
    <scope>NUCLEOTIDE SEQUENCE [LARGE SCALE GENOMIC DNA]</scope>
    <source>
        <strain>cv. Columbia</strain>
    </source>
</reference>
<reference key="2">
    <citation type="journal article" date="2017" name="Plant J.">
        <title>Araport11: a complete reannotation of the Arabidopsis thaliana reference genome.</title>
        <authorList>
            <person name="Cheng C.Y."/>
            <person name="Krishnakumar V."/>
            <person name="Chan A.P."/>
            <person name="Thibaud-Nissen F."/>
            <person name="Schobel S."/>
            <person name="Town C.D."/>
        </authorList>
    </citation>
    <scope>GENOME REANNOTATION</scope>
    <source>
        <strain>cv. Columbia</strain>
    </source>
</reference>
<reference key="3">
    <citation type="journal article" date="2003" name="Science">
        <title>Empirical analysis of transcriptional activity in the Arabidopsis genome.</title>
        <authorList>
            <person name="Yamada K."/>
            <person name="Lim J."/>
            <person name="Dale J.M."/>
            <person name="Chen H."/>
            <person name="Shinn P."/>
            <person name="Palm C.J."/>
            <person name="Southwick A.M."/>
            <person name="Wu H.C."/>
            <person name="Kim C.J."/>
            <person name="Nguyen M."/>
            <person name="Pham P.K."/>
            <person name="Cheuk R.F."/>
            <person name="Karlin-Newmann G."/>
            <person name="Liu S.X."/>
            <person name="Lam B."/>
            <person name="Sakano H."/>
            <person name="Wu T."/>
            <person name="Yu G."/>
            <person name="Miranda M."/>
            <person name="Quach H.L."/>
            <person name="Tripp M."/>
            <person name="Chang C.H."/>
            <person name="Lee J.M."/>
            <person name="Toriumi M.J."/>
            <person name="Chan M.M."/>
            <person name="Tang C.C."/>
            <person name="Onodera C.S."/>
            <person name="Deng J.M."/>
            <person name="Akiyama K."/>
            <person name="Ansari Y."/>
            <person name="Arakawa T."/>
            <person name="Banh J."/>
            <person name="Banno F."/>
            <person name="Bowser L."/>
            <person name="Brooks S.Y."/>
            <person name="Carninci P."/>
            <person name="Chao Q."/>
            <person name="Choy N."/>
            <person name="Enju A."/>
            <person name="Goldsmith A.D."/>
            <person name="Gurjal M."/>
            <person name="Hansen N.F."/>
            <person name="Hayashizaki Y."/>
            <person name="Johnson-Hopson C."/>
            <person name="Hsuan V.W."/>
            <person name="Iida K."/>
            <person name="Karnes M."/>
            <person name="Khan S."/>
            <person name="Koesema E."/>
            <person name="Ishida J."/>
            <person name="Jiang P.X."/>
            <person name="Jones T."/>
            <person name="Kawai J."/>
            <person name="Kamiya A."/>
            <person name="Meyers C."/>
            <person name="Nakajima M."/>
            <person name="Narusaka M."/>
            <person name="Seki M."/>
            <person name="Sakurai T."/>
            <person name="Satou M."/>
            <person name="Tamse R."/>
            <person name="Vaysberg M."/>
            <person name="Wallender E.K."/>
            <person name="Wong C."/>
            <person name="Yamamura Y."/>
            <person name="Yuan S."/>
            <person name="Shinozaki K."/>
            <person name="Davis R.W."/>
            <person name="Theologis A."/>
            <person name="Ecker J.R."/>
        </authorList>
    </citation>
    <scope>NUCLEOTIDE SEQUENCE [LARGE SCALE MRNA]</scope>
    <source>
        <strain>cv. Columbia</strain>
    </source>
</reference>
<reference key="4">
    <citation type="submission" date="2002-03" db="EMBL/GenBank/DDBJ databases">
        <title>Full-length cDNA from Arabidopsis thaliana.</title>
        <authorList>
            <person name="Brover V.V."/>
            <person name="Troukhan M.E."/>
            <person name="Alexandrov N.A."/>
            <person name="Lu Y.-P."/>
            <person name="Flavell R.B."/>
            <person name="Feldmann K.A."/>
        </authorList>
    </citation>
    <scope>NUCLEOTIDE SEQUENCE [LARGE SCALE MRNA]</scope>
</reference>
<reference key="5">
    <citation type="journal article" date="2009" name="DNA Res.">
        <title>Analysis of multiple occurrences of alternative splicing events in Arabidopsis thaliana using novel sequenced full-length cDNAs.</title>
        <authorList>
            <person name="Iida K."/>
            <person name="Fukami-Kobayashi K."/>
            <person name="Toyoda A."/>
            <person name="Sakaki Y."/>
            <person name="Kobayashi M."/>
            <person name="Seki M."/>
            <person name="Shinozaki K."/>
        </authorList>
    </citation>
    <scope>NUCLEOTIDE SEQUENCE [LARGE SCALE MRNA] OF 114-405</scope>
    <source>
        <strain>cv. Columbia</strain>
    </source>
</reference>
<reference key="6">
    <citation type="journal article" date="2013" name="Plant Cell">
        <title>Catalase and NO CATALASE ACTIVITY1 promote autophagy-dependent cell death in Arabidopsis.</title>
        <authorList>
            <person name="Hackenberg T."/>
            <person name="Juul T."/>
            <person name="Auzina A."/>
            <person name="Gwizdz S."/>
            <person name="Malolepszy A."/>
            <person name="Van Der Kelen K."/>
            <person name="Dam S."/>
            <person name="Bressendorff S."/>
            <person name="Lorentzen A."/>
            <person name="Roepstorff P."/>
            <person name="Lehmann Nielsen K."/>
            <person name="Joergensen J.E."/>
            <person name="Hofius D."/>
            <person name="Van Breusegem F."/>
            <person name="Petersen M."/>
            <person name="Andersen S.U."/>
        </authorList>
    </citation>
    <scope>FUNCTION</scope>
    <scope>SUBCELLULAR LOCATION</scope>
    <scope>DISRUPTION PHENOTYPE</scope>
</reference>
<reference key="7">
    <citation type="journal article" date="2015" name="Plant Cell">
        <title>A chaperone function of NO CATALASE ACTIVITY1 is required to maintain catalase activity and for multiple stress responses in Arabidopsis.</title>
        <authorList>
            <person name="Li J."/>
            <person name="Liu J."/>
            <person name="Wang G."/>
            <person name="Cha J.Y."/>
            <person name="Li G."/>
            <person name="Chen S."/>
            <person name="Li Z."/>
            <person name="Guo J."/>
            <person name="Zhang C."/>
            <person name="Yang Y."/>
            <person name="Kim W.Y."/>
            <person name="Yun D.J."/>
            <person name="Schumaker K.S."/>
            <person name="Chen Z."/>
            <person name="Guo Y."/>
        </authorList>
    </citation>
    <scope>FUNCTION</scope>
    <scope>TISSUE SPECIFICITY</scope>
    <scope>SUBCELLULAR LOCATION</scope>
    <scope>DISRUPTION PHENOTYPE</scope>
    <scope>INTERACTION WITH CAT1; CAT2 AND CAT3</scope>
    <scope>INDUCTION BY H(2)O(2) AND SALT</scope>
    <scope>DOMAIN</scope>
    <scope>MUTAGENESIS OF CYS-111; HIS-126 AND CYS-129</scope>
</reference>
<name>NCA1_ARATH</name>
<evidence type="ECO:0000255" key="1"/>
<evidence type="ECO:0000255" key="2">
    <source>
        <dbReference type="PROSITE-ProRule" id="PRU00175"/>
    </source>
</evidence>
<evidence type="ECO:0000256" key="3">
    <source>
        <dbReference type="SAM" id="MobiDB-lite"/>
    </source>
</evidence>
<evidence type="ECO:0000269" key="4">
    <source>
    </source>
</evidence>
<evidence type="ECO:0000269" key="5">
    <source>
    </source>
</evidence>
<evidence type="ECO:0000303" key="6">
    <source>
    </source>
</evidence>
<evidence type="ECO:0000312" key="7">
    <source>
        <dbReference type="Araport" id="AT3G54360"/>
    </source>
</evidence>
<evidence type="ECO:0000312" key="8">
    <source>
        <dbReference type="EMBL" id="CAB81801.1"/>
    </source>
</evidence>
<protein>
    <recommendedName>
        <fullName evidence="6">Protein NCA1</fullName>
    </recommendedName>
    <alternativeName>
        <fullName evidence="6">NO CATALASE ACTIVITY 1</fullName>
    </alternativeName>
</protein>
<keyword id="KW-0143">Chaperone</keyword>
<keyword id="KW-0963">Cytoplasm</keyword>
<keyword id="KW-0479">Metal-binding</keyword>
<keyword id="KW-0539">Nucleus</keyword>
<keyword id="KW-1185">Reference proteome</keyword>
<keyword id="KW-0677">Repeat</keyword>
<keyword id="KW-0802">TPR repeat</keyword>
<keyword id="KW-0862">Zinc</keyword>
<keyword id="KW-0863">Zinc-finger</keyword>
<dbReference type="EMBL" id="AL132971">
    <property type="protein sequence ID" value="CAB81801.1"/>
    <property type="molecule type" value="Genomic_DNA"/>
</dbReference>
<dbReference type="EMBL" id="CP002686">
    <property type="protein sequence ID" value="AEE79220.1"/>
    <property type="molecule type" value="Genomic_DNA"/>
</dbReference>
<dbReference type="EMBL" id="CP002686">
    <property type="protein sequence ID" value="ANM65013.1"/>
    <property type="molecule type" value="Genomic_DNA"/>
</dbReference>
<dbReference type="EMBL" id="AF410273">
    <property type="protein sequence ID" value="AAK95259.1"/>
    <property type="molecule type" value="mRNA"/>
</dbReference>
<dbReference type="EMBL" id="BT000620">
    <property type="protein sequence ID" value="AAN18187.1"/>
    <property type="molecule type" value="mRNA"/>
</dbReference>
<dbReference type="EMBL" id="AY086065">
    <property type="protein sequence ID" value="AAM63273.1"/>
    <property type="molecule type" value="mRNA"/>
</dbReference>
<dbReference type="EMBL" id="AK317708">
    <property type="protein sequence ID" value="BAH20367.1"/>
    <property type="molecule type" value="mRNA"/>
</dbReference>
<dbReference type="PIR" id="T47595">
    <property type="entry name" value="T47595"/>
</dbReference>
<dbReference type="RefSeq" id="NP_001327012.1">
    <property type="nucleotide sequence ID" value="NM_001339663.1"/>
</dbReference>
<dbReference type="RefSeq" id="NP_191004.1">
    <property type="nucleotide sequence ID" value="NM_115296.3"/>
</dbReference>
<dbReference type="SMR" id="Q9M2V1"/>
<dbReference type="FunCoup" id="Q9M2V1">
    <property type="interactions" value="1997"/>
</dbReference>
<dbReference type="IntAct" id="Q9M2V1">
    <property type="interactions" value="2"/>
</dbReference>
<dbReference type="STRING" id="3702.Q9M2V1"/>
<dbReference type="iPTMnet" id="Q9M2V1"/>
<dbReference type="PaxDb" id="3702-AT3G54360.1"/>
<dbReference type="ProteomicsDB" id="251096"/>
<dbReference type="EnsemblPlants" id="AT3G54360.1">
    <property type="protein sequence ID" value="AT3G54360.1"/>
    <property type="gene ID" value="AT3G54360"/>
</dbReference>
<dbReference type="EnsemblPlants" id="AT3G54360.2">
    <property type="protein sequence ID" value="AT3G54360.2"/>
    <property type="gene ID" value="AT3G54360"/>
</dbReference>
<dbReference type="GeneID" id="824603"/>
<dbReference type="Gramene" id="AT3G54360.1">
    <property type="protein sequence ID" value="AT3G54360.1"/>
    <property type="gene ID" value="AT3G54360"/>
</dbReference>
<dbReference type="Gramene" id="AT3G54360.2">
    <property type="protein sequence ID" value="AT3G54360.2"/>
    <property type="gene ID" value="AT3G54360"/>
</dbReference>
<dbReference type="KEGG" id="ath:AT3G54360"/>
<dbReference type="Araport" id="AT3G54360"/>
<dbReference type="TAIR" id="AT3G54360">
    <property type="gene designation" value="NCA1"/>
</dbReference>
<dbReference type="eggNOG" id="ENOG502QW0D">
    <property type="taxonomic scope" value="Eukaryota"/>
</dbReference>
<dbReference type="HOGENOM" id="CLU_050147_0_0_1"/>
<dbReference type="InParanoid" id="Q9M2V1"/>
<dbReference type="OMA" id="CMPCSHK"/>
<dbReference type="OrthoDB" id="1305878at2759"/>
<dbReference type="PhylomeDB" id="Q9M2V1"/>
<dbReference type="PRO" id="PR:Q9M2V1"/>
<dbReference type="Proteomes" id="UP000006548">
    <property type="component" value="Chromosome 3"/>
</dbReference>
<dbReference type="ExpressionAtlas" id="Q9M2V1">
    <property type="expression patterns" value="baseline and differential"/>
</dbReference>
<dbReference type="GO" id="GO:0005829">
    <property type="term" value="C:cytosol"/>
    <property type="evidence" value="ECO:0000314"/>
    <property type="project" value="TAIR"/>
</dbReference>
<dbReference type="GO" id="GO:0005634">
    <property type="term" value="C:nucleus"/>
    <property type="evidence" value="ECO:0000314"/>
    <property type="project" value="TAIR"/>
</dbReference>
<dbReference type="GO" id="GO:0008270">
    <property type="term" value="F:zinc ion binding"/>
    <property type="evidence" value="ECO:0007669"/>
    <property type="project" value="UniProtKB-KW"/>
</dbReference>
<dbReference type="GO" id="GO:1902553">
    <property type="term" value="P:positive regulation of catalase activity"/>
    <property type="evidence" value="ECO:0000315"/>
    <property type="project" value="TAIR"/>
</dbReference>
<dbReference type="Gene3D" id="1.25.40.10">
    <property type="entry name" value="Tetratricopeptide repeat domain"/>
    <property type="match status" value="1"/>
</dbReference>
<dbReference type="Gene3D" id="3.30.40.10">
    <property type="entry name" value="Zinc/RING finger domain, C3HC4 (zinc finger)"/>
    <property type="match status" value="1"/>
</dbReference>
<dbReference type="InterPro" id="IPR011990">
    <property type="entry name" value="TPR-like_helical_dom_sf"/>
</dbReference>
<dbReference type="InterPro" id="IPR001841">
    <property type="entry name" value="Znf_RING"/>
</dbReference>
<dbReference type="InterPro" id="IPR013083">
    <property type="entry name" value="Znf_RING/FYVE/PHD"/>
</dbReference>
<dbReference type="InterPro" id="IPR017907">
    <property type="entry name" value="Znf_RING_CS"/>
</dbReference>
<dbReference type="PANTHER" id="PTHR15315:SF89">
    <property type="entry name" value="OS01G0104100 PROTEIN"/>
    <property type="match status" value="1"/>
</dbReference>
<dbReference type="PANTHER" id="PTHR15315">
    <property type="entry name" value="RING FINGER PROTEIN 41, 151"/>
    <property type="match status" value="1"/>
</dbReference>
<dbReference type="SUPFAM" id="SSF57850">
    <property type="entry name" value="RING/U-box"/>
    <property type="match status" value="1"/>
</dbReference>
<dbReference type="SUPFAM" id="SSF48452">
    <property type="entry name" value="TPR-like"/>
    <property type="match status" value="1"/>
</dbReference>
<dbReference type="PROSITE" id="PS00518">
    <property type="entry name" value="ZF_RING_1"/>
    <property type="match status" value="1"/>
</dbReference>
<dbReference type="PROSITE" id="PS50089">
    <property type="entry name" value="ZF_RING_2"/>
    <property type="match status" value="1"/>
</dbReference>
<proteinExistence type="evidence at protein level"/>